<organism>
    <name type="scientific">Saccharomyces cerevisiae (strain ATCC 204508 / S288c)</name>
    <name type="common">Baker's yeast</name>
    <dbReference type="NCBI Taxonomy" id="559292"/>
    <lineage>
        <taxon>Eukaryota</taxon>
        <taxon>Fungi</taxon>
        <taxon>Dikarya</taxon>
        <taxon>Ascomycota</taxon>
        <taxon>Saccharomycotina</taxon>
        <taxon>Saccharomycetes</taxon>
        <taxon>Saccharomycetales</taxon>
        <taxon>Saccharomycetaceae</taxon>
        <taxon>Saccharomyces</taxon>
    </lineage>
</organism>
<feature type="chain" id="PRO_0000194900" description="BNI1-related protein 1">
    <location>
        <begin position="1"/>
        <end position="1375"/>
    </location>
</feature>
<feature type="domain" description="GBD/FH3" evidence="4">
    <location>
        <begin position="94"/>
        <end position="490"/>
    </location>
</feature>
<feature type="domain" description="FH1">
    <location>
        <begin position="659"/>
        <end position="851"/>
    </location>
</feature>
<feature type="domain" description="FH2" evidence="5">
    <location>
        <begin position="868"/>
        <end position="1290"/>
    </location>
</feature>
<feature type="domain" description="DAD" evidence="3">
    <location>
        <begin position="1302"/>
        <end position="1336"/>
    </location>
</feature>
<feature type="region of interest" description="Disordered" evidence="6">
    <location>
        <begin position="661"/>
        <end position="684"/>
    </location>
</feature>
<feature type="region of interest" description="Disordered" evidence="6">
    <location>
        <begin position="764"/>
        <end position="785"/>
    </location>
</feature>
<feature type="region of interest" description="Disordered" evidence="6">
    <location>
        <begin position="817"/>
        <end position="839"/>
    </location>
</feature>
<feature type="region of interest" description="Disordered" evidence="6">
    <location>
        <begin position="1285"/>
        <end position="1309"/>
    </location>
</feature>
<feature type="coiled-coil region" evidence="2">
    <location>
        <begin position="520"/>
        <end position="601"/>
    </location>
</feature>
<feature type="compositionally biased region" description="Pro residues" evidence="6">
    <location>
        <begin position="767"/>
        <end position="781"/>
    </location>
</feature>
<feature type="compositionally biased region" description="Pro residues" evidence="6">
    <location>
        <begin position="818"/>
        <end position="828"/>
    </location>
</feature>
<feature type="modified residue" description="Phosphoserine" evidence="10">
    <location>
        <position position="621"/>
    </location>
</feature>
<feature type="modified residue" description="Phosphoserine" evidence="10">
    <location>
        <position position="751"/>
    </location>
</feature>
<sequence length="1375" mass="156852">MDSSPNKKTYRYPRRSLSLHARDRVSEARKLEELNLNDGLVAAGLQLVGVALEKQGTGSHIYMKQKNFSANDVSSSPMVSEEVNGSEMDFNPKCMPQDASLVERMFDELLKDGTFFWGAAYKNLQNISLRRKWLLICKIRSSNHWGKKKVTSSTTYSTHLATNELAENAHFLDGLVRNLSTGGMKLSKALYKLEKFLRKQSFLQLFLKDEIYLTTLIEKTLPLISKELQFVYLRCFKILMNNPLARIRALHSEPLIRWFTELLTDQNSNLKCQLLSMELLLLLTYVEGSTGCELIWDQLSILFTDWLEWFDKILADDIAIHSSLYLNWNQLKIDYSTTFLLLINSILQGFNNKTALEILNFLKKNNIHNTITFLELAYKDDPNSVVIMEQIKQFKSKESAIFDSMIKTTNDTNSLHPTKDIARIESEPLCLENCLLLKAKDSPVEAPINEIIQSLWKILDSQKPYSESIKLLKLINSLLFYLIDSFQVSTNPSFDETLESAENVDYVFQDSVNKLLDSLQSDEIARRAVTEIDDLNAKISHLNEKLNLVENHDKDHLIAKLDESESLISLKTKEIENLKLQLKATKKRLDQITTHQRLYDQPPSLASSNLSIAGSIIKNNSHGNIIFQNLAKKQQQQQKISLPKRSTSLLKSKRVTSLSSYLTDANNENESQNESEDKSKDSLFQRSTSTINFNIPSMKNITNMQNVSLNSILSELEFSNSLGTQPNYQSSPVLSSVSSSPKLFPRLSSDSLDNGIQLVPEVVKLPQLPPPPPPPPPPPLPQSLLTEAEAKPDGVSCIAAPAPPPLPDLFKTKTCGAVPPPPPPPPLPESLSMNKGPSNHDLVTPPAPPLPNGLLSSSSVSINPTTTDLKPPPTEKRLKQIHWDKVEDIKDTLWEDTFQRQETIKELQTDGIFSQIEDIFKMKSPTKIANKRNAESSIALSSNNGKSSNELKKISFLSRDLAQQFGINLHMFSQLSDMEFVMKVLNCDNDIVQNVNILKFFCKEELVNIPKSMLNKYEPYSQGKDGKAVSDLQRADRIFLELCINLRFYWNARSKSLLTLSTYERDYYDLIFKLQKIDDAISHLNRSPKFKSLMFIITEIGNHMNKRIVKGIKLKSLTKLAFVRSSIDQNVSFLHFIEKVIRIKYPDIYGFVDDLKNIEDLGKISLEHVESECHEFHKKIEDLVTQFQVGKLSKEENLDPRDQIIKKVKFKINRAKTKSELLIGQCKLTLIDLNKLMKYYGEDPKDKESKNEFFQPFIEFLAMFKKCAKENIEKEEMERVYEQRKSLLDMRTSSNKKSNGSDENDGEKVNRDAVDLLISKLREVKKDPEPLRRRKSTKLNEIAINVHEGDVKTRKDEDHVLLERTHAMLNDIQNI</sequence>
<proteinExistence type="evidence at protein level"/>
<protein>
    <recommendedName>
        <fullName>BNI1-related protein 1</fullName>
    </recommendedName>
</protein>
<comment type="function">
    <text evidence="1 8">May organize microtubules by mediating spindle positioning and movement in the budding process. Potential target of the RHO family members (By similarity).</text>
</comment>
<comment type="subunit">
    <text>Interacts with profilin at the FH1 domain.</text>
</comment>
<comment type="interaction">
    <interactant intactId="EBI-3711">
        <id>P40450</id>
    </interactant>
    <interactant intactId="EBI-7179">
        <id>P11710</id>
        <label>FUS1</label>
    </interactant>
    <organismsDiffer>false</organismsDiffer>
    <experiments>5</experiments>
</comment>
<comment type="interaction">
    <interactant intactId="EBI-3711">
        <id>P40450</id>
    </interactant>
    <interactant intactId="EBI-5412">
        <id>Q05080</id>
        <label>HOF1</label>
    </interactant>
    <organismsDiffer>false</organismsDiffer>
    <experiments>5</experiments>
</comment>
<comment type="interaction">
    <interactant intactId="EBI-3711">
        <id>P40450</id>
    </interactant>
    <interactant intactId="EBI-11670">
        <id>P36006</id>
        <label>MYO3</label>
    </interactant>
    <organismsDiffer>false</organismsDiffer>
    <experiments>6</experiments>
</comment>
<comment type="interaction">
    <interactant intactId="EBI-3711">
        <id>P40450</id>
    </interactant>
    <interactant intactId="EBI-11687">
        <id>Q04439</id>
        <label>MYO5</label>
    </interactant>
    <organismsDiffer>false</organismsDiffer>
    <experiments>7</experiments>
</comment>
<comment type="domain">
    <text evidence="1">The DAD domain regulates activation via by an autoinhibitory interaction with the GBD/FH3 domain. This autoinhibition is released upon competitive binding of an activated GTPase. The release of DAD allows the FH2 domain to then nucleate and elongate nonbranched actin filaments (By similarity).</text>
</comment>
<comment type="miscellaneous">
    <text evidence="7">Present with 259 molecules/cell in log phase SD medium.</text>
</comment>
<comment type="similarity">
    <text evidence="9">Belongs to the formin homology family. BNI1 subfamily.</text>
</comment>
<evidence type="ECO:0000250" key="1"/>
<evidence type="ECO:0000255" key="2"/>
<evidence type="ECO:0000255" key="3">
    <source>
        <dbReference type="PROSITE-ProRule" id="PRU00577"/>
    </source>
</evidence>
<evidence type="ECO:0000255" key="4">
    <source>
        <dbReference type="PROSITE-ProRule" id="PRU00579"/>
    </source>
</evidence>
<evidence type="ECO:0000255" key="5">
    <source>
        <dbReference type="PROSITE-ProRule" id="PRU00774"/>
    </source>
</evidence>
<evidence type="ECO:0000256" key="6">
    <source>
        <dbReference type="SAM" id="MobiDB-lite"/>
    </source>
</evidence>
<evidence type="ECO:0000269" key="7">
    <source>
    </source>
</evidence>
<evidence type="ECO:0000269" key="8">
    <source>
    </source>
</evidence>
<evidence type="ECO:0000305" key="9"/>
<evidence type="ECO:0007744" key="10">
    <source>
    </source>
</evidence>
<name>BNR1_YEAST</name>
<reference key="1">
    <citation type="journal article" date="1997" name="Nature">
        <title>The nucleotide sequence of Saccharomyces cerevisiae chromosome IX.</title>
        <authorList>
            <person name="Churcher C.M."/>
            <person name="Bowman S."/>
            <person name="Badcock K."/>
            <person name="Bankier A.T."/>
            <person name="Brown D."/>
            <person name="Chillingworth T."/>
            <person name="Connor R."/>
            <person name="Devlin K."/>
            <person name="Gentles S."/>
            <person name="Hamlin N."/>
            <person name="Harris D.E."/>
            <person name="Horsnell T."/>
            <person name="Hunt S."/>
            <person name="Jagels K."/>
            <person name="Jones M."/>
            <person name="Lye G."/>
            <person name="Moule S."/>
            <person name="Odell C."/>
            <person name="Pearson D."/>
            <person name="Rajandream M.A."/>
            <person name="Rice P."/>
            <person name="Rowley N."/>
            <person name="Skelton J."/>
            <person name="Smith V."/>
            <person name="Walsh S.V."/>
            <person name="Whitehead S."/>
            <person name="Barrell B.G."/>
        </authorList>
    </citation>
    <scope>NUCLEOTIDE SEQUENCE [LARGE SCALE GENOMIC DNA]</scope>
    <source>
        <strain>ATCC 204508 / S288c</strain>
    </source>
</reference>
<reference key="2">
    <citation type="journal article" date="2014" name="G3 (Bethesda)">
        <title>The reference genome sequence of Saccharomyces cerevisiae: Then and now.</title>
        <authorList>
            <person name="Engel S.R."/>
            <person name="Dietrich F.S."/>
            <person name="Fisk D.G."/>
            <person name="Binkley G."/>
            <person name="Balakrishnan R."/>
            <person name="Costanzo M.C."/>
            <person name="Dwight S.S."/>
            <person name="Hitz B.C."/>
            <person name="Karra K."/>
            <person name="Nash R.S."/>
            <person name="Weng S."/>
            <person name="Wong E.D."/>
            <person name="Lloyd P."/>
            <person name="Skrzypek M.S."/>
            <person name="Miyasato S.R."/>
            <person name="Simison M."/>
            <person name="Cherry J.M."/>
        </authorList>
    </citation>
    <scope>GENOME REANNOTATION</scope>
    <source>
        <strain>ATCC 204508 / S288c</strain>
    </source>
</reference>
<reference key="3">
    <citation type="journal article" date="1997" name="EMBO J.">
        <title>Bni1p and Bnr1p: downstream targets of the Rho family small G-proteins which interact with profilin and regulate actin cytoskeleton in Saccharomyces cerevisiae.</title>
        <authorList>
            <person name="Imamura H."/>
            <person name="Tanaka K."/>
            <person name="Hihara T."/>
            <person name="Umikawa M."/>
            <person name="Kamei T."/>
            <person name="Takahashi K."/>
            <person name="Sasaki T."/>
            <person name="Takai Y."/>
        </authorList>
    </citation>
    <scope>FUNCTION</scope>
</reference>
<reference key="4">
    <citation type="journal article" date="2003" name="Nature">
        <title>Global analysis of protein expression in yeast.</title>
        <authorList>
            <person name="Ghaemmaghami S."/>
            <person name="Huh W.-K."/>
            <person name="Bower K."/>
            <person name="Howson R.W."/>
            <person name="Belle A."/>
            <person name="Dephoure N."/>
            <person name="O'Shea E.K."/>
            <person name="Weissman J.S."/>
        </authorList>
    </citation>
    <scope>LEVEL OF PROTEIN EXPRESSION [LARGE SCALE ANALYSIS]</scope>
</reference>
<reference key="5">
    <citation type="journal article" date="2008" name="Mol. Cell. Proteomics">
        <title>A multidimensional chromatography technology for in-depth phosphoproteome analysis.</title>
        <authorList>
            <person name="Albuquerque C.P."/>
            <person name="Smolka M.B."/>
            <person name="Payne S.H."/>
            <person name="Bafna V."/>
            <person name="Eng J."/>
            <person name="Zhou H."/>
        </authorList>
    </citation>
    <scope>IDENTIFICATION BY MASS SPECTROMETRY [LARGE SCALE ANALYSIS]</scope>
</reference>
<reference key="6">
    <citation type="journal article" date="2009" name="Science">
        <title>Global analysis of Cdk1 substrate phosphorylation sites provides insights into evolution.</title>
        <authorList>
            <person name="Holt L.J."/>
            <person name="Tuch B.B."/>
            <person name="Villen J."/>
            <person name="Johnson A.D."/>
            <person name="Gygi S.P."/>
            <person name="Morgan D.O."/>
        </authorList>
    </citation>
    <scope>PHOSPHORYLATION [LARGE SCALE ANALYSIS] AT SER-621 AND SER-751</scope>
    <scope>IDENTIFICATION BY MASS SPECTROMETRY [LARGE SCALE ANALYSIS]</scope>
</reference>
<dbReference type="EMBL" id="Z38059">
    <property type="protein sequence ID" value="CAA86119.1"/>
    <property type="molecule type" value="Genomic_DNA"/>
</dbReference>
<dbReference type="EMBL" id="BK006942">
    <property type="protein sequence ID" value="DAA08393.1"/>
    <property type="molecule type" value="Genomic_DNA"/>
</dbReference>
<dbReference type="PIR" id="S48375">
    <property type="entry name" value="S48375"/>
</dbReference>
<dbReference type="RefSeq" id="NP_012107.1">
    <property type="nucleotide sequence ID" value="NM_001179507.1"/>
</dbReference>
<dbReference type="SMR" id="P40450"/>
<dbReference type="BioGRID" id="34833">
    <property type="interactions" value="200"/>
</dbReference>
<dbReference type="DIP" id="DIP-817N"/>
<dbReference type="FunCoup" id="P40450">
    <property type="interactions" value="356"/>
</dbReference>
<dbReference type="IntAct" id="P40450">
    <property type="interactions" value="19"/>
</dbReference>
<dbReference type="MINT" id="P40450"/>
<dbReference type="STRING" id="4932.YIL159W"/>
<dbReference type="iPTMnet" id="P40450"/>
<dbReference type="PaxDb" id="4932-YIL159W"/>
<dbReference type="PeptideAtlas" id="P40450"/>
<dbReference type="EnsemblFungi" id="YIL159W_mRNA">
    <property type="protein sequence ID" value="YIL159W"/>
    <property type="gene ID" value="YIL159W"/>
</dbReference>
<dbReference type="GeneID" id="854647"/>
<dbReference type="KEGG" id="sce:YIL159W"/>
<dbReference type="AGR" id="SGD:S000001421"/>
<dbReference type="SGD" id="S000001421">
    <property type="gene designation" value="BNR1"/>
</dbReference>
<dbReference type="VEuPathDB" id="FungiDB:YIL159W"/>
<dbReference type="eggNOG" id="KOG1922">
    <property type="taxonomic scope" value="Eukaryota"/>
</dbReference>
<dbReference type="GeneTree" id="ENSGT00940000170414"/>
<dbReference type="HOGENOM" id="CLU_002339_0_0_1"/>
<dbReference type="InParanoid" id="P40450"/>
<dbReference type="OMA" id="DINHIPQ"/>
<dbReference type="OrthoDB" id="1104827at2759"/>
<dbReference type="BioCyc" id="YEAST:G3O-31407-MONOMER"/>
<dbReference type="BioGRID-ORCS" id="854647">
    <property type="hits" value="1 hit in 10 CRISPR screens"/>
</dbReference>
<dbReference type="PRO" id="PR:P40450"/>
<dbReference type="Proteomes" id="UP000002311">
    <property type="component" value="Chromosome IX"/>
</dbReference>
<dbReference type="RNAct" id="P40450">
    <property type="molecule type" value="protein"/>
</dbReference>
<dbReference type="GO" id="GO:0032153">
    <property type="term" value="C:cell division site"/>
    <property type="evidence" value="ECO:0000314"/>
    <property type="project" value="SGD"/>
</dbReference>
<dbReference type="GO" id="GO:0005935">
    <property type="term" value="C:cellular bud neck"/>
    <property type="evidence" value="ECO:0000314"/>
    <property type="project" value="SGD"/>
</dbReference>
<dbReference type="GO" id="GO:0005829">
    <property type="term" value="C:cytosol"/>
    <property type="evidence" value="ECO:0000314"/>
    <property type="project" value="SGD"/>
</dbReference>
<dbReference type="GO" id="GO:0043332">
    <property type="term" value="C:mating projection tip"/>
    <property type="evidence" value="ECO:0000318"/>
    <property type="project" value="GO_Central"/>
</dbReference>
<dbReference type="GO" id="GO:0110085">
    <property type="term" value="C:mitotic actomyosin contractile ring"/>
    <property type="evidence" value="ECO:0000318"/>
    <property type="project" value="GO_Central"/>
</dbReference>
<dbReference type="GO" id="GO:0051015">
    <property type="term" value="F:actin filament binding"/>
    <property type="evidence" value="ECO:0000318"/>
    <property type="project" value="GO_Central"/>
</dbReference>
<dbReference type="GO" id="GO:0005522">
    <property type="term" value="F:profilin binding"/>
    <property type="evidence" value="ECO:0000314"/>
    <property type="project" value="SGD"/>
</dbReference>
<dbReference type="GO" id="GO:0031267">
    <property type="term" value="F:small GTPase binding"/>
    <property type="evidence" value="ECO:0007669"/>
    <property type="project" value="InterPro"/>
</dbReference>
<dbReference type="GO" id="GO:0051017">
    <property type="term" value="P:actin filament bundle assembly"/>
    <property type="evidence" value="ECO:0000314"/>
    <property type="project" value="SGD"/>
</dbReference>
<dbReference type="GO" id="GO:0045010">
    <property type="term" value="P:actin nucleation"/>
    <property type="evidence" value="ECO:0000314"/>
    <property type="project" value="SGD"/>
</dbReference>
<dbReference type="GO" id="GO:0051016">
    <property type="term" value="P:barbed-end actin filament capping"/>
    <property type="evidence" value="ECO:0000314"/>
    <property type="project" value="SGD"/>
</dbReference>
<dbReference type="GO" id="GO:0071474">
    <property type="term" value="P:cellular hyperosmotic response"/>
    <property type="evidence" value="ECO:0000316"/>
    <property type="project" value="SGD"/>
</dbReference>
<dbReference type="GO" id="GO:0070649">
    <property type="term" value="P:formin-nucleated actin cable assembly"/>
    <property type="evidence" value="ECO:0000314"/>
    <property type="project" value="SGD"/>
</dbReference>
<dbReference type="GO" id="GO:1903475">
    <property type="term" value="P:mitotic actomyosin contractile ring assembly"/>
    <property type="evidence" value="ECO:0000316"/>
    <property type="project" value="SGD"/>
</dbReference>
<dbReference type="GO" id="GO:0032956">
    <property type="term" value="P:regulation of actin cytoskeleton organization"/>
    <property type="evidence" value="ECO:0000316"/>
    <property type="project" value="SGD"/>
</dbReference>
<dbReference type="FunFam" id="6.10.30.50:FF:000002">
    <property type="entry name" value="BNR1p Formin"/>
    <property type="match status" value="1"/>
</dbReference>
<dbReference type="FunFam" id="1.20.58.2220:FF:000006">
    <property type="entry name" value="Cytokinesis protein sepA"/>
    <property type="match status" value="1"/>
</dbReference>
<dbReference type="Gene3D" id="6.10.30.50">
    <property type="match status" value="1"/>
</dbReference>
<dbReference type="Gene3D" id="1.20.58.2220">
    <property type="entry name" value="Formin, FH2 domain"/>
    <property type="match status" value="1"/>
</dbReference>
<dbReference type="Gene3D" id="1.25.10.10">
    <property type="entry name" value="Leucine-rich Repeat Variant"/>
    <property type="match status" value="1"/>
</dbReference>
<dbReference type="InterPro" id="IPR051661">
    <property type="entry name" value="Actin_filament_regulator"/>
</dbReference>
<dbReference type="InterPro" id="IPR011989">
    <property type="entry name" value="ARM-like"/>
</dbReference>
<dbReference type="InterPro" id="IPR016024">
    <property type="entry name" value="ARM-type_fold"/>
</dbReference>
<dbReference type="InterPro" id="IPR014767">
    <property type="entry name" value="DAD_dom"/>
</dbReference>
<dbReference type="InterPro" id="IPR015425">
    <property type="entry name" value="FH2_Formin"/>
</dbReference>
<dbReference type="InterPro" id="IPR042201">
    <property type="entry name" value="FH2_Formin_sf"/>
</dbReference>
<dbReference type="InterPro" id="IPR014768">
    <property type="entry name" value="GBD/FH3_dom"/>
</dbReference>
<dbReference type="InterPro" id="IPR010473">
    <property type="entry name" value="GTPase-bd"/>
</dbReference>
<dbReference type="PANTHER" id="PTHR47102:SF1">
    <property type="entry name" value="BNI1-RELATED PROTEIN 1"/>
    <property type="match status" value="1"/>
</dbReference>
<dbReference type="PANTHER" id="PTHR47102">
    <property type="entry name" value="PROTEIN BNI1"/>
    <property type="match status" value="1"/>
</dbReference>
<dbReference type="Pfam" id="PF02181">
    <property type="entry name" value="FH2"/>
    <property type="match status" value="1"/>
</dbReference>
<dbReference type="SMART" id="SM01140">
    <property type="entry name" value="Drf_GBD"/>
    <property type="match status" value="1"/>
</dbReference>
<dbReference type="SMART" id="SM00498">
    <property type="entry name" value="FH2"/>
    <property type="match status" value="1"/>
</dbReference>
<dbReference type="SUPFAM" id="SSF48371">
    <property type="entry name" value="ARM repeat"/>
    <property type="match status" value="1"/>
</dbReference>
<dbReference type="SUPFAM" id="SSF101447">
    <property type="entry name" value="Formin homology 2 domain (FH2 domain)"/>
    <property type="match status" value="1"/>
</dbReference>
<dbReference type="PROSITE" id="PS51231">
    <property type="entry name" value="DAD"/>
    <property type="match status" value="1"/>
</dbReference>
<dbReference type="PROSITE" id="PS51444">
    <property type="entry name" value="FH2"/>
    <property type="match status" value="1"/>
</dbReference>
<dbReference type="PROSITE" id="PS51232">
    <property type="entry name" value="GBD_FH3"/>
    <property type="match status" value="1"/>
</dbReference>
<accession>P40450</accession>
<accession>D6VVC7</accession>
<keyword id="KW-0175">Coiled coil</keyword>
<keyword id="KW-0597">Phosphoprotein</keyword>
<keyword id="KW-1185">Reference proteome</keyword>
<gene>
    <name type="primary">BNR1</name>
    <name type="ordered locus">YIL159W</name>
</gene>